<proteinExistence type="evidence at protein level"/>
<sequence>MDLHSLLELGTKPTAPHVRNKKVILFDTNHQVSICNQIIDAINSGIDLGDLLEGGLLTLCVEHYYNSDKDKFNTSPIAKYLRDAGYEFDVIKNADATRFLDVIPNEPHYSPLILALKTLESTESQRGRIGLFLSFCSLFLPKLVVGDRASIEKALRQVTVHQEQGIVTYPNHWLTTGHMKVIFGILRSSFILKFVLIHQGVNLVTGHDAYDSIISNSVGQTRFSGLLIVKTVLEFILQKTDSGVTLHPLVRTSKVKNEVASFKQALSNLARHGEYAPFARVLNLSGINNLEHGLYPQLSAIALGVATAHGSTLAGVNVGEQYQQLREAAHDAEVKLQRRHEHQEIQAIAEDDEERKILEQFHLQKTEITHSQTLAVLSQKREKLARLAAEIENNIVEDQGFKQSQNRVSQSFLNDPTPVEVTVQARPVNRPTALPPPVDDKIEHESTEDSSSSSSFVDLNDPFALLNEDEDTLDDSVMIPSTTSREFQGIPESPGQSQDLDNSQGKQEDESTNPIKKQFLRYQELPPVQEDDESEYTTDSQESIDQPGSDNEQGVDLPPPPLYTQEKRQDPIQHPAASSQDPFGSIGDVNGDILEPIRSPSSPSAPQEDTRAREAYELSPDFTNYEDNQQNWPQRVVTKKGRTFLYPNDLLQTSPPESLVTALVEEYQNPVSAKELQADWPDMSFDERRHVAMNL</sequence>
<comment type="function">
    <text evidence="1">Encapsidates the genome, protecting it from nucleases. The encapsidated genomic RNA is termed the nucleocapsid and serves as template for transcription and replication. During replication, encapsidation by NP is coupled to RNA synthesis and all replicative products are resistant to nucleases (By similarity).</text>
</comment>
<comment type="subunit">
    <text evidence="1">Homooligomer. Homomultimerizes to form the nucleocapsid. Binds to viral genomic RNA. Interacts with VP35 and VP30 to form the nucleocapsid. Also interacts with VP24 and VP40 (By similarity).</text>
</comment>
<comment type="subcellular location">
    <subcellularLocation>
        <location>Virion</location>
    </subcellularLocation>
    <subcellularLocation>
        <location evidence="1">Host cytoplasm</location>
    </subcellularLocation>
</comment>
<comment type="domain">
    <text evidence="1">This protein can be divided into a hydrophobic N-terminal half, and a hydrophilic and highly acidic C-terminal half.</text>
</comment>
<comment type="domain">
    <text evidence="1">The coiled coil region is critical for homooligomerization, for the interaction with VP35 and for NP function in RNA synthesis.</text>
</comment>
<comment type="domain">
    <text evidence="1">Late-budding domains (L domains) are short sequence motifs essential for viral particle budding. They recruit proteins of the host ESCRT machinery (Endosomal Sorting Complex Required for Transport) or ESCRT-associated proteins. Nucleoprotein contains one L domain: a PTAP/PSAP motif, which interacts with the UEV domain of TSG101 (By similarity).</text>
</comment>
<comment type="PTM">
    <text evidence="1">Phosphorylated.</text>
</comment>
<comment type="similarity">
    <text evidence="4">Belongs to the filoviruses nucleoprotein family.</text>
</comment>
<reference key="1">
    <citation type="submission" date="2003-08" db="EMBL/GenBank/DDBJ databases">
        <authorList>
            <person name="Bowen M.D."/>
            <person name="Thurman K."/>
            <person name="Minor E."/>
            <person name="Ibrahim M.S."/>
            <person name="Meyer R.F."/>
            <person name="Malfatti S.A."/>
            <person name="Do L.H."/>
            <person name="Smith K.L."/>
            <person name="McCready P.M."/>
            <person name="Chain P.S.G."/>
        </authorList>
    </citation>
    <scope>NUCLEOTIDE SEQUENCE [GENOMIC RNA]</scope>
</reference>
<gene>
    <name type="primary">NP</name>
</gene>
<feature type="chain" id="PRO_0000314974" description="Nucleoprotein">
    <location>
        <begin position="1"/>
        <end position="695"/>
    </location>
</feature>
<feature type="region of interest" description="Disordered" evidence="3">
    <location>
        <begin position="424"/>
        <end position="458"/>
    </location>
</feature>
<feature type="region of interest" description="Disordered" evidence="3">
    <location>
        <begin position="483"/>
        <end position="615"/>
    </location>
</feature>
<feature type="coiled-coil region" evidence="2">
    <location>
        <begin position="316"/>
        <end position="341"/>
    </location>
</feature>
<feature type="coiled-coil region" evidence="2">
    <location>
        <begin position="372"/>
        <end position="399"/>
    </location>
</feature>
<feature type="short sequence motif" description="PTAP/PSAP motif" evidence="1">
    <location>
        <begin position="603"/>
        <end position="606"/>
    </location>
</feature>
<feature type="compositionally biased region" description="Basic and acidic residues" evidence="3">
    <location>
        <begin position="438"/>
        <end position="447"/>
    </location>
</feature>
<feature type="compositionally biased region" description="Polar residues" evidence="3">
    <location>
        <begin position="494"/>
        <end position="505"/>
    </location>
</feature>
<feature type="compositionally biased region" description="Polar residues" evidence="3">
    <location>
        <begin position="537"/>
        <end position="552"/>
    </location>
</feature>
<feature type="strand" evidence="6">
    <location>
        <begin position="22"/>
        <end position="27"/>
    </location>
</feature>
<feature type="helix" evidence="6">
    <location>
        <begin position="31"/>
        <end position="43"/>
    </location>
</feature>
<feature type="helix" evidence="6">
    <location>
        <begin position="49"/>
        <end position="51"/>
    </location>
</feature>
<feature type="helix" evidence="6">
    <location>
        <begin position="52"/>
        <end position="65"/>
    </location>
</feature>
<feature type="helix" evidence="6">
    <location>
        <begin position="69"/>
        <end position="73"/>
    </location>
</feature>
<feature type="helix" evidence="6">
    <location>
        <begin position="76"/>
        <end position="83"/>
    </location>
</feature>
<feature type="strand" evidence="6">
    <location>
        <begin position="87"/>
        <end position="92"/>
    </location>
</feature>
<feature type="helix" evidence="6">
    <location>
        <begin position="99"/>
        <end position="102"/>
    </location>
</feature>
<feature type="helix" evidence="6">
    <location>
        <begin position="107"/>
        <end position="109"/>
    </location>
</feature>
<feature type="helix" evidence="6">
    <location>
        <begin position="110"/>
        <end position="117"/>
    </location>
</feature>
<feature type="helix" evidence="6">
    <location>
        <begin position="127"/>
        <end position="137"/>
    </location>
</feature>
<feature type="helix" evidence="6">
    <location>
        <begin position="138"/>
        <end position="145"/>
    </location>
</feature>
<feature type="helix" evidence="6">
    <location>
        <begin position="147"/>
        <end position="163"/>
    </location>
</feature>
<feature type="helix" evidence="6">
    <location>
        <begin position="171"/>
        <end position="174"/>
    </location>
</feature>
<feature type="helix" evidence="6">
    <location>
        <begin position="176"/>
        <end position="188"/>
    </location>
</feature>
<feature type="helix" evidence="6">
    <location>
        <begin position="190"/>
        <end position="201"/>
    </location>
</feature>
<feature type="helix" evidence="6">
    <location>
        <begin position="211"/>
        <end position="221"/>
    </location>
</feature>
<feature type="turn" evidence="6">
    <location>
        <begin position="222"/>
        <end position="226"/>
    </location>
</feature>
<feature type="helix" evidence="6">
    <location>
        <begin position="227"/>
        <end position="234"/>
    </location>
</feature>
<feature type="strand" evidence="5">
    <location>
        <begin position="237"/>
        <end position="240"/>
    </location>
</feature>
<feature type="strand" evidence="5">
    <location>
        <begin position="243"/>
        <end position="246"/>
    </location>
</feature>
<feature type="turn" evidence="6">
    <location>
        <begin position="248"/>
        <end position="251"/>
    </location>
</feature>
<feature type="helix" evidence="6">
    <location>
        <begin position="253"/>
        <end position="255"/>
    </location>
</feature>
<feature type="helix" evidence="6">
    <location>
        <begin position="256"/>
        <end position="270"/>
    </location>
</feature>
<feature type="helix" evidence="6">
    <location>
        <begin position="271"/>
        <end position="278"/>
    </location>
</feature>
<feature type="turn" evidence="6">
    <location>
        <begin position="279"/>
        <end position="283"/>
    </location>
</feature>
<feature type="helix" evidence="6">
    <location>
        <begin position="292"/>
        <end position="294"/>
    </location>
</feature>
<feature type="helix" evidence="6">
    <location>
        <begin position="296"/>
        <end position="308"/>
    </location>
</feature>
<feature type="helix" evidence="6">
    <location>
        <begin position="320"/>
        <end position="322"/>
    </location>
</feature>
<feature type="helix" evidence="6">
    <location>
        <begin position="323"/>
        <end position="334"/>
    </location>
</feature>
<name>NCAP_MABVO</name>
<dbReference type="EMBL" id="AY358025">
    <property type="protein sequence ID" value="AAQ55255.1"/>
    <property type="molecule type" value="Genomic_RNA"/>
</dbReference>
<dbReference type="PDB" id="5F5M">
    <property type="method" value="X-ray"/>
    <property type="resolution" value="2.90 A"/>
    <property type="chains" value="A/B=19-370"/>
</dbReference>
<dbReference type="PDB" id="5F5O">
    <property type="method" value="X-ray"/>
    <property type="resolution" value="2.20 A"/>
    <property type="chains" value="A/C/E=19-370"/>
</dbReference>
<dbReference type="PDB" id="5XSQ">
    <property type="method" value="X-ray"/>
    <property type="resolution" value="2.60 A"/>
    <property type="chains" value="A/C/E=18-344"/>
</dbReference>
<dbReference type="PDBsum" id="5F5M"/>
<dbReference type="PDBsum" id="5F5O"/>
<dbReference type="PDBsum" id="5XSQ"/>
<dbReference type="SMR" id="Q6UY69"/>
<dbReference type="Proteomes" id="UP000000838">
    <property type="component" value="Genome"/>
</dbReference>
<dbReference type="GO" id="GO:0019029">
    <property type="term" value="C:helical viral capsid"/>
    <property type="evidence" value="ECO:0007669"/>
    <property type="project" value="UniProtKB-KW"/>
</dbReference>
<dbReference type="GO" id="GO:0030430">
    <property type="term" value="C:host cell cytoplasm"/>
    <property type="evidence" value="ECO:0007669"/>
    <property type="project" value="UniProtKB-SubCell"/>
</dbReference>
<dbReference type="GO" id="GO:1990904">
    <property type="term" value="C:ribonucleoprotein complex"/>
    <property type="evidence" value="ECO:0007669"/>
    <property type="project" value="UniProtKB-KW"/>
</dbReference>
<dbReference type="GO" id="GO:0019013">
    <property type="term" value="C:viral nucleocapsid"/>
    <property type="evidence" value="ECO:0007669"/>
    <property type="project" value="UniProtKB-KW"/>
</dbReference>
<dbReference type="GO" id="GO:0003723">
    <property type="term" value="F:RNA binding"/>
    <property type="evidence" value="ECO:0007669"/>
    <property type="project" value="UniProtKB-KW"/>
</dbReference>
<dbReference type="GO" id="GO:0039702">
    <property type="term" value="P:viral budding via host ESCRT complex"/>
    <property type="evidence" value="ECO:0007669"/>
    <property type="project" value="UniProtKB-KW"/>
</dbReference>
<dbReference type="GO" id="GO:0019074">
    <property type="term" value="P:viral RNA genome packaging"/>
    <property type="evidence" value="ECO:0007669"/>
    <property type="project" value="InterPro"/>
</dbReference>
<dbReference type="InterPro" id="IPR008609">
    <property type="entry name" value="Ebola_NP"/>
</dbReference>
<dbReference type="Pfam" id="PF05505">
    <property type="entry name" value="Ebola_NP"/>
    <property type="match status" value="1"/>
</dbReference>
<dbReference type="PIRSF" id="PIRSF003900">
    <property type="entry name" value="N_FiloV"/>
    <property type="match status" value="1"/>
</dbReference>
<accession>Q6UY69</accession>
<keyword id="KW-0002">3D-structure</keyword>
<keyword id="KW-0167">Capsid protein</keyword>
<keyword id="KW-0175">Coiled coil</keyword>
<keyword id="KW-1139">Helical capsid protein</keyword>
<keyword id="KW-1035">Host cytoplasm</keyword>
<keyword id="KW-0945">Host-virus interaction</keyword>
<keyword id="KW-0597">Phosphoprotein</keyword>
<keyword id="KW-0687">Ribonucleoprotein</keyword>
<keyword id="KW-0694">RNA-binding</keyword>
<keyword id="KW-1198">Viral budding</keyword>
<keyword id="KW-1187">Viral budding via the host ESCRT complexes</keyword>
<keyword id="KW-0543">Viral nucleoprotein</keyword>
<keyword id="KW-1188">Viral release from host cell</keyword>
<keyword id="KW-0946">Virion</keyword>
<organism>
    <name type="scientific">Lake Victoria marburgvirus (strain Ozolin-75)</name>
    <name type="common">MARV</name>
    <name type="synonym">Marburg virus (strain South Africa/Ozolin/1975)</name>
    <dbReference type="NCBI Taxonomy" id="482820"/>
    <lineage>
        <taxon>Viruses</taxon>
        <taxon>Riboviria</taxon>
        <taxon>Orthornavirae</taxon>
        <taxon>Negarnaviricota</taxon>
        <taxon>Haploviricotina</taxon>
        <taxon>Monjiviricetes</taxon>
        <taxon>Mononegavirales</taxon>
        <taxon>Filoviridae</taxon>
        <taxon>Orthomarburgvirus</taxon>
        <taxon>Orthomarburgvirus marburgense</taxon>
    </lineage>
</organism>
<evidence type="ECO:0000250" key="1"/>
<evidence type="ECO:0000255" key="2"/>
<evidence type="ECO:0000256" key="3">
    <source>
        <dbReference type="SAM" id="MobiDB-lite"/>
    </source>
</evidence>
<evidence type="ECO:0000305" key="4"/>
<evidence type="ECO:0007829" key="5">
    <source>
        <dbReference type="PDB" id="5F5M"/>
    </source>
</evidence>
<evidence type="ECO:0007829" key="6">
    <source>
        <dbReference type="PDB" id="5F5O"/>
    </source>
</evidence>
<protein>
    <recommendedName>
        <fullName>Nucleoprotein</fullName>
    </recommendedName>
    <alternativeName>
        <fullName>Nucleocapsid protein</fullName>
    </alternativeName>
</protein>
<organismHost>
    <name type="scientific">Chlorocebus aethiops</name>
    <name type="common">Green monkey</name>
    <name type="synonym">Cercopithecus aethiops</name>
    <dbReference type="NCBI Taxonomy" id="9534"/>
</organismHost>
<organismHost>
    <name type="scientific">Homo sapiens</name>
    <name type="common">Human</name>
    <dbReference type="NCBI Taxonomy" id="9606"/>
</organismHost>
<organismHost>
    <name type="scientific">Rousettus aegyptiacus</name>
    <name type="common">Egyptian fruit bat</name>
    <name type="synonym">Pteropus aegyptiacus</name>
    <dbReference type="NCBI Taxonomy" id="9407"/>
</organismHost>